<reference key="1">
    <citation type="journal article" date="2007" name="Proc. Natl. Acad. Sci. U.S.A.">
        <title>The genome of Syntrophus aciditrophicus: life at the thermodynamic limit of microbial growth.</title>
        <authorList>
            <person name="McInerney M.J."/>
            <person name="Rohlin L."/>
            <person name="Mouttaki H."/>
            <person name="Kim U."/>
            <person name="Krupp R.S."/>
            <person name="Rios-Hernandez L."/>
            <person name="Sieber J."/>
            <person name="Struchtemeyer C.G."/>
            <person name="Bhattacharyya A."/>
            <person name="Campbell J.W."/>
            <person name="Gunsalus R.P."/>
        </authorList>
    </citation>
    <scope>NUCLEOTIDE SEQUENCE [LARGE SCALE GENOMIC DNA]</scope>
    <source>
        <strain>SB</strain>
    </source>
</reference>
<proteinExistence type="inferred from homology"/>
<name>MEND_SYNAS</name>
<sequence>MPLSDNLNLLWSSLIVAELVKNGLDTFFISPGNRNAPLISALIHEERSVKKICVDERAAGYRALGHAKAAGRPGVLVCTSGTAPANYYPAVIEAFRDEIPLVILSADRPPELIGSDANQTIVQPDLYGRYCRDSLLIPCPSADYPLEALLARIDSLIARPVGPVHINCAFRDPLVPGIPDSRPIPDELLATAGRLYAREGAYTTYPSPGTLHTGLEDVEAILNRTARGLIVIGRLDGPRDAPALEELAKKLGWPVFCDIASSMKGRIPSDRQIFSLDHPEALRLVSAYAPETILQFGSGLVSKHYFASLLPHSEATVIQISPRAGLRDPAHRVNVRLSMPAFAFVEGLHLQENPSLDATACCLFLDSLETLYQALQRRIPEETLSFSRIASDLLGAVPDGEGLFLGNSLVIRAFDKFRSPFPRKISVISNRGVSGIEGNIATSVGFAEASRRRVTAVIGDISFLHDLNSLLLLAQSATPVVLIIINNGGGRIFERLPIRDFPEILEPYMTTPHGMTFDLLAAQFDLPYFRAATPDELRKAYESALDAERSAVLEVTLDPEEDLRTFQTFQNVRLP</sequence>
<evidence type="ECO:0000255" key="1">
    <source>
        <dbReference type="HAMAP-Rule" id="MF_01659"/>
    </source>
</evidence>
<evidence type="ECO:0000305" key="2"/>
<feature type="chain" id="PRO_0000341879" description="2-succinyl-5-enolpyruvyl-6-hydroxy-3-cyclohexene-1-carboxylate synthase">
    <location>
        <begin position="1"/>
        <end position="575"/>
    </location>
</feature>
<comment type="function">
    <text evidence="1">Catalyzes the thiamine diphosphate-dependent decarboxylation of 2-oxoglutarate and the subsequent addition of the resulting succinic semialdehyde-thiamine pyrophosphate anion to isochorismate to yield 2-succinyl-5-enolpyruvyl-6-hydroxy-3-cyclohexene-1-carboxylate (SEPHCHC).</text>
</comment>
<comment type="catalytic activity">
    <reaction evidence="1">
        <text>isochorismate + 2-oxoglutarate + H(+) = 5-enolpyruvoyl-6-hydroxy-2-succinyl-cyclohex-3-ene-1-carboxylate + CO2</text>
        <dbReference type="Rhea" id="RHEA:25593"/>
        <dbReference type="ChEBI" id="CHEBI:15378"/>
        <dbReference type="ChEBI" id="CHEBI:16526"/>
        <dbReference type="ChEBI" id="CHEBI:16810"/>
        <dbReference type="ChEBI" id="CHEBI:29780"/>
        <dbReference type="ChEBI" id="CHEBI:58818"/>
        <dbReference type="EC" id="2.2.1.9"/>
    </reaction>
</comment>
<comment type="cofactor">
    <cofactor evidence="1">
        <name>Mg(2+)</name>
        <dbReference type="ChEBI" id="CHEBI:18420"/>
    </cofactor>
    <cofactor evidence="1">
        <name>Mn(2+)</name>
        <dbReference type="ChEBI" id="CHEBI:29035"/>
    </cofactor>
</comment>
<comment type="cofactor">
    <cofactor evidence="1">
        <name>thiamine diphosphate</name>
        <dbReference type="ChEBI" id="CHEBI:58937"/>
    </cofactor>
    <text evidence="1">Binds 1 thiamine pyrophosphate per subunit.</text>
</comment>
<comment type="pathway">
    <text evidence="1">Quinol/quinone metabolism; 1,4-dihydroxy-2-naphthoate biosynthesis; 1,4-dihydroxy-2-naphthoate from chorismate: step 2/7.</text>
</comment>
<comment type="pathway">
    <text evidence="1">Quinol/quinone metabolism; menaquinone biosynthesis.</text>
</comment>
<comment type="subunit">
    <text evidence="1">Homodimer.</text>
</comment>
<comment type="similarity">
    <text evidence="1">Belongs to the TPP enzyme family. MenD subfamily.</text>
</comment>
<comment type="sequence caution" evidence="2">
    <conflict type="erroneous initiation">
        <sequence resource="EMBL-CDS" id="ABC78757"/>
    </conflict>
</comment>
<gene>
    <name evidence="1" type="primary">menD</name>
    <name type="ordered locus">SYNAS_28780</name>
    <name type="ORF">SYN_02399</name>
</gene>
<accession>Q2LXE3</accession>
<dbReference type="EC" id="2.2.1.9" evidence="1"/>
<dbReference type="EMBL" id="CP000252">
    <property type="protein sequence ID" value="ABC78757.1"/>
    <property type="status" value="ALT_INIT"/>
    <property type="molecule type" value="Genomic_DNA"/>
</dbReference>
<dbReference type="RefSeq" id="WP_011418773.1">
    <property type="nucleotide sequence ID" value="NC_007759.1"/>
</dbReference>
<dbReference type="SMR" id="Q2LXE3"/>
<dbReference type="FunCoup" id="Q2LXE3">
    <property type="interactions" value="96"/>
</dbReference>
<dbReference type="STRING" id="56780.SYN_02399"/>
<dbReference type="KEGG" id="sat:SYN_02399"/>
<dbReference type="eggNOG" id="COG1165">
    <property type="taxonomic scope" value="Bacteria"/>
</dbReference>
<dbReference type="HOGENOM" id="CLU_006051_3_0_7"/>
<dbReference type="InParanoid" id="Q2LXE3"/>
<dbReference type="OrthoDB" id="9791859at2"/>
<dbReference type="UniPathway" id="UPA00079"/>
<dbReference type="UniPathway" id="UPA01057">
    <property type="reaction ID" value="UER00164"/>
</dbReference>
<dbReference type="Proteomes" id="UP000001933">
    <property type="component" value="Chromosome"/>
</dbReference>
<dbReference type="GO" id="GO:0070204">
    <property type="term" value="F:2-succinyl-5-enolpyruvyl-6-hydroxy-3-cyclohexene-1-carboxylic-acid synthase activity"/>
    <property type="evidence" value="ECO:0007669"/>
    <property type="project" value="UniProtKB-UniRule"/>
</dbReference>
<dbReference type="GO" id="GO:0000287">
    <property type="term" value="F:magnesium ion binding"/>
    <property type="evidence" value="ECO:0007669"/>
    <property type="project" value="UniProtKB-UniRule"/>
</dbReference>
<dbReference type="GO" id="GO:0030145">
    <property type="term" value="F:manganese ion binding"/>
    <property type="evidence" value="ECO:0007669"/>
    <property type="project" value="UniProtKB-UniRule"/>
</dbReference>
<dbReference type="GO" id="GO:0030976">
    <property type="term" value="F:thiamine pyrophosphate binding"/>
    <property type="evidence" value="ECO:0007669"/>
    <property type="project" value="UniProtKB-UniRule"/>
</dbReference>
<dbReference type="GO" id="GO:0009234">
    <property type="term" value="P:menaquinone biosynthetic process"/>
    <property type="evidence" value="ECO:0007669"/>
    <property type="project" value="UniProtKB-UniRule"/>
</dbReference>
<dbReference type="CDD" id="cd07037">
    <property type="entry name" value="TPP_PYR_MenD"/>
    <property type="match status" value="1"/>
</dbReference>
<dbReference type="CDD" id="cd02009">
    <property type="entry name" value="TPP_SHCHC_synthase"/>
    <property type="match status" value="1"/>
</dbReference>
<dbReference type="Gene3D" id="3.40.50.970">
    <property type="match status" value="2"/>
</dbReference>
<dbReference type="Gene3D" id="3.40.50.1220">
    <property type="entry name" value="TPP-binding domain"/>
    <property type="match status" value="1"/>
</dbReference>
<dbReference type="HAMAP" id="MF_01659">
    <property type="entry name" value="MenD"/>
    <property type="match status" value="1"/>
</dbReference>
<dbReference type="InterPro" id="IPR029035">
    <property type="entry name" value="DHS-like_NAD/FAD-binding_dom"/>
</dbReference>
<dbReference type="InterPro" id="IPR004433">
    <property type="entry name" value="MenaQ_synth_MenD"/>
</dbReference>
<dbReference type="InterPro" id="IPR032264">
    <property type="entry name" value="MenD_middle"/>
</dbReference>
<dbReference type="InterPro" id="IPR029061">
    <property type="entry name" value="THDP-binding"/>
</dbReference>
<dbReference type="InterPro" id="IPR012001">
    <property type="entry name" value="Thiamin_PyroP_enz_TPP-bd_dom"/>
</dbReference>
<dbReference type="InterPro" id="IPR011766">
    <property type="entry name" value="TPP_enzyme_TPP-bd"/>
</dbReference>
<dbReference type="NCBIfam" id="TIGR00173">
    <property type="entry name" value="menD"/>
    <property type="match status" value="1"/>
</dbReference>
<dbReference type="PANTHER" id="PTHR42916">
    <property type="entry name" value="2-SUCCINYL-5-ENOLPYRUVYL-6-HYDROXY-3-CYCLOHEXENE-1-CARBOXYLATE SYNTHASE"/>
    <property type="match status" value="1"/>
</dbReference>
<dbReference type="PANTHER" id="PTHR42916:SF1">
    <property type="entry name" value="PROTEIN PHYLLO, CHLOROPLASTIC"/>
    <property type="match status" value="1"/>
</dbReference>
<dbReference type="Pfam" id="PF02775">
    <property type="entry name" value="TPP_enzyme_C"/>
    <property type="match status" value="1"/>
</dbReference>
<dbReference type="Pfam" id="PF16582">
    <property type="entry name" value="TPP_enzyme_M_2"/>
    <property type="match status" value="1"/>
</dbReference>
<dbReference type="Pfam" id="PF02776">
    <property type="entry name" value="TPP_enzyme_N"/>
    <property type="match status" value="1"/>
</dbReference>
<dbReference type="PIRSF" id="PIRSF004983">
    <property type="entry name" value="MenD"/>
    <property type="match status" value="1"/>
</dbReference>
<dbReference type="SUPFAM" id="SSF52467">
    <property type="entry name" value="DHS-like NAD/FAD-binding domain"/>
    <property type="match status" value="1"/>
</dbReference>
<dbReference type="SUPFAM" id="SSF52518">
    <property type="entry name" value="Thiamin diphosphate-binding fold (THDP-binding)"/>
    <property type="match status" value="2"/>
</dbReference>
<protein>
    <recommendedName>
        <fullName evidence="1">2-succinyl-5-enolpyruvyl-6-hydroxy-3-cyclohexene-1-carboxylate synthase</fullName>
        <shortName evidence="1">SEPHCHC synthase</shortName>
        <ecNumber evidence="1">2.2.1.9</ecNumber>
    </recommendedName>
    <alternativeName>
        <fullName evidence="1">Menaquinone biosynthesis protein MenD</fullName>
    </alternativeName>
</protein>
<keyword id="KW-0460">Magnesium</keyword>
<keyword id="KW-0464">Manganese</keyword>
<keyword id="KW-0474">Menaquinone biosynthesis</keyword>
<keyword id="KW-0479">Metal-binding</keyword>
<keyword id="KW-1185">Reference proteome</keyword>
<keyword id="KW-0786">Thiamine pyrophosphate</keyword>
<keyword id="KW-0808">Transferase</keyword>
<organism>
    <name type="scientific">Syntrophus aciditrophicus (strain SB)</name>
    <dbReference type="NCBI Taxonomy" id="56780"/>
    <lineage>
        <taxon>Bacteria</taxon>
        <taxon>Pseudomonadati</taxon>
        <taxon>Thermodesulfobacteriota</taxon>
        <taxon>Syntrophia</taxon>
        <taxon>Syntrophales</taxon>
        <taxon>Syntrophaceae</taxon>
        <taxon>Syntrophus</taxon>
    </lineage>
</organism>